<proteinExistence type="inferred from homology"/>
<dbReference type="EC" id="2.8.4.3" evidence="1"/>
<dbReference type="EMBL" id="CP000950">
    <property type="protein sequence ID" value="ACA69278.1"/>
    <property type="status" value="ALT_INIT"/>
    <property type="molecule type" value="Genomic_DNA"/>
</dbReference>
<dbReference type="RefSeq" id="WP_041176100.1">
    <property type="nucleotide sequence ID" value="NZ_CP009792.1"/>
</dbReference>
<dbReference type="SMR" id="B1JG95"/>
<dbReference type="KEGG" id="ypy:YPK_3005"/>
<dbReference type="PATRIC" id="fig|502800.11.peg.3725"/>
<dbReference type="GO" id="GO:0005829">
    <property type="term" value="C:cytosol"/>
    <property type="evidence" value="ECO:0007669"/>
    <property type="project" value="TreeGrafter"/>
</dbReference>
<dbReference type="GO" id="GO:0051539">
    <property type="term" value="F:4 iron, 4 sulfur cluster binding"/>
    <property type="evidence" value="ECO:0007669"/>
    <property type="project" value="UniProtKB-UniRule"/>
</dbReference>
<dbReference type="GO" id="GO:0046872">
    <property type="term" value="F:metal ion binding"/>
    <property type="evidence" value="ECO:0007669"/>
    <property type="project" value="UniProtKB-KW"/>
</dbReference>
<dbReference type="GO" id="GO:0035597">
    <property type="term" value="F:N6-isopentenyladenosine methylthiotransferase activity"/>
    <property type="evidence" value="ECO:0007669"/>
    <property type="project" value="TreeGrafter"/>
</dbReference>
<dbReference type="CDD" id="cd01335">
    <property type="entry name" value="Radical_SAM"/>
    <property type="match status" value="1"/>
</dbReference>
<dbReference type="FunFam" id="3.40.50.12160:FF:000001">
    <property type="entry name" value="tRNA-2-methylthio-N(6)-dimethylallyladenosine synthase"/>
    <property type="match status" value="1"/>
</dbReference>
<dbReference type="FunFam" id="3.80.30.20:FF:000001">
    <property type="entry name" value="tRNA-2-methylthio-N(6)-dimethylallyladenosine synthase 2"/>
    <property type="match status" value="1"/>
</dbReference>
<dbReference type="Gene3D" id="3.40.50.12160">
    <property type="entry name" value="Methylthiotransferase, N-terminal domain"/>
    <property type="match status" value="1"/>
</dbReference>
<dbReference type="Gene3D" id="3.80.30.20">
    <property type="entry name" value="tm_1862 like domain"/>
    <property type="match status" value="1"/>
</dbReference>
<dbReference type="HAMAP" id="MF_01864">
    <property type="entry name" value="tRNA_metthiotr_MiaB"/>
    <property type="match status" value="1"/>
</dbReference>
<dbReference type="InterPro" id="IPR006638">
    <property type="entry name" value="Elp3/MiaA/NifB-like_rSAM"/>
</dbReference>
<dbReference type="InterPro" id="IPR005839">
    <property type="entry name" value="Methylthiotransferase"/>
</dbReference>
<dbReference type="InterPro" id="IPR020612">
    <property type="entry name" value="Methylthiotransferase_CS"/>
</dbReference>
<dbReference type="InterPro" id="IPR013848">
    <property type="entry name" value="Methylthiotransferase_N"/>
</dbReference>
<dbReference type="InterPro" id="IPR038135">
    <property type="entry name" value="Methylthiotransferase_N_sf"/>
</dbReference>
<dbReference type="InterPro" id="IPR006463">
    <property type="entry name" value="MiaB_methiolase"/>
</dbReference>
<dbReference type="InterPro" id="IPR007197">
    <property type="entry name" value="rSAM"/>
</dbReference>
<dbReference type="InterPro" id="IPR023404">
    <property type="entry name" value="rSAM_horseshoe"/>
</dbReference>
<dbReference type="InterPro" id="IPR002792">
    <property type="entry name" value="TRAM_dom"/>
</dbReference>
<dbReference type="NCBIfam" id="TIGR01574">
    <property type="entry name" value="miaB-methiolase"/>
    <property type="match status" value="1"/>
</dbReference>
<dbReference type="NCBIfam" id="TIGR00089">
    <property type="entry name" value="MiaB/RimO family radical SAM methylthiotransferase"/>
    <property type="match status" value="1"/>
</dbReference>
<dbReference type="PANTHER" id="PTHR43020">
    <property type="entry name" value="CDK5 REGULATORY SUBUNIT-ASSOCIATED PROTEIN 1"/>
    <property type="match status" value="1"/>
</dbReference>
<dbReference type="PANTHER" id="PTHR43020:SF2">
    <property type="entry name" value="MITOCHONDRIAL TRNA METHYLTHIOTRANSFERASE CDK5RAP1"/>
    <property type="match status" value="1"/>
</dbReference>
<dbReference type="Pfam" id="PF04055">
    <property type="entry name" value="Radical_SAM"/>
    <property type="match status" value="1"/>
</dbReference>
<dbReference type="Pfam" id="PF01938">
    <property type="entry name" value="TRAM"/>
    <property type="match status" value="1"/>
</dbReference>
<dbReference type="Pfam" id="PF00919">
    <property type="entry name" value="UPF0004"/>
    <property type="match status" value="1"/>
</dbReference>
<dbReference type="SFLD" id="SFLDF00273">
    <property type="entry name" value="(dimethylallyl)adenosine_tRNA"/>
    <property type="match status" value="1"/>
</dbReference>
<dbReference type="SFLD" id="SFLDG01082">
    <property type="entry name" value="B12-binding_domain_containing"/>
    <property type="match status" value="1"/>
</dbReference>
<dbReference type="SFLD" id="SFLDS00029">
    <property type="entry name" value="Radical_SAM"/>
    <property type="match status" value="1"/>
</dbReference>
<dbReference type="SMART" id="SM00729">
    <property type="entry name" value="Elp3"/>
    <property type="match status" value="1"/>
</dbReference>
<dbReference type="SUPFAM" id="SSF102114">
    <property type="entry name" value="Radical SAM enzymes"/>
    <property type="match status" value="1"/>
</dbReference>
<dbReference type="PROSITE" id="PS51449">
    <property type="entry name" value="MTTASE_N"/>
    <property type="match status" value="1"/>
</dbReference>
<dbReference type="PROSITE" id="PS01278">
    <property type="entry name" value="MTTASE_RADICAL"/>
    <property type="match status" value="1"/>
</dbReference>
<dbReference type="PROSITE" id="PS51918">
    <property type="entry name" value="RADICAL_SAM"/>
    <property type="match status" value="1"/>
</dbReference>
<dbReference type="PROSITE" id="PS50926">
    <property type="entry name" value="TRAM"/>
    <property type="match status" value="1"/>
</dbReference>
<organism>
    <name type="scientific">Yersinia pseudotuberculosis serotype O:3 (strain YPIII)</name>
    <dbReference type="NCBI Taxonomy" id="502800"/>
    <lineage>
        <taxon>Bacteria</taxon>
        <taxon>Pseudomonadati</taxon>
        <taxon>Pseudomonadota</taxon>
        <taxon>Gammaproteobacteria</taxon>
        <taxon>Enterobacterales</taxon>
        <taxon>Yersiniaceae</taxon>
        <taxon>Yersinia</taxon>
    </lineage>
</organism>
<protein>
    <recommendedName>
        <fullName evidence="1">tRNA-2-methylthio-N(6)-dimethylallyladenosine synthase</fullName>
        <ecNumber evidence="1">2.8.4.3</ecNumber>
    </recommendedName>
    <alternativeName>
        <fullName evidence="1">(Dimethylallyl)adenosine tRNA methylthiotransferase MiaB</fullName>
    </alternativeName>
    <alternativeName>
        <fullName evidence="1">tRNA-i(6)A37 methylthiotransferase</fullName>
    </alternativeName>
</protein>
<comment type="function">
    <text evidence="1">Catalyzes the methylthiolation of N6-(dimethylallyl)adenosine (i(6)A), leading to the formation of 2-methylthio-N6-(dimethylallyl)adenosine (ms(2)i(6)A) at position 37 in tRNAs that read codons beginning with uridine.</text>
</comment>
<comment type="catalytic activity">
    <reaction evidence="1">
        <text>N(6)-dimethylallyladenosine(37) in tRNA + (sulfur carrier)-SH + AH2 + 2 S-adenosyl-L-methionine = 2-methylsulfanyl-N(6)-dimethylallyladenosine(37) in tRNA + (sulfur carrier)-H + 5'-deoxyadenosine + L-methionine + A + S-adenosyl-L-homocysteine + 2 H(+)</text>
        <dbReference type="Rhea" id="RHEA:37067"/>
        <dbReference type="Rhea" id="RHEA-COMP:10375"/>
        <dbReference type="Rhea" id="RHEA-COMP:10376"/>
        <dbReference type="Rhea" id="RHEA-COMP:14737"/>
        <dbReference type="Rhea" id="RHEA-COMP:14739"/>
        <dbReference type="ChEBI" id="CHEBI:13193"/>
        <dbReference type="ChEBI" id="CHEBI:15378"/>
        <dbReference type="ChEBI" id="CHEBI:17319"/>
        <dbReference type="ChEBI" id="CHEBI:17499"/>
        <dbReference type="ChEBI" id="CHEBI:29917"/>
        <dbReference type="ChEBI" id="CHEBI:57844"/>
        <dbReference type="ChEBI" id="CHEBI:57856"/>
        <dbReference type="ChEBI" id="CHEBI:59789"/>
        <dbReference type="ChEBI" id="CHEBI:64428"/>
        <dbReference type="ChEBI" id="CHEBI:74415"/>
        <dbReference type="ChEBI" id="CHEBI:74417"/>
        <dbReference type="EC" id="2.8.4.3"/>
    </reaction>
</comment>
<comment type="cofactor">
    <cofactor evidence="1">
        <name>[4Fe-4S] cluster</name>
        <dbReference type="ChEBI" id="CHEBI:49883"/>
    </cofactor>
    <text evidence="1">Binds 2 [4Fe-4S] clusters. One cluster is coordinated with 3 cysteines and an exchangeable S-adenosyl-L-methionine.</text>
</comment>
<comment type="subunit">
    <text evidence="1">Monomer.</text>
</comment>
<comment type="subcellular location">
    <subcellularLocation>
        <location evidence="1">Cytoplasm</location>
    </subcellularLocation>
</comment>
<comment type="similarity">
    <text evidence="1">Belongs to the methylthiotransferase family. MiaB subfamily.</text>
</comment>
<comment type="sequence caution" evidence="3">
    <conflict type="erroneous initiation">
        <sequence resource="EMBL-CDS" id="ACA69278"/>
    </conflict>
</comment>
<reference key="1">
    <citation type="submission" date="2008-02" db="EMBL/GenBank/DDBJ databases">
        <title>Complete sequence of Yersinia pseudotuberculosis YPIII.</title>
        <authorList>
            <consortium name="US DOE Joint Genome Institute"/>
            <person name="Copeland A."/>
            <person name="Lucas S."/>
            <person name="Lapidus A."/>
            <person name="Glavina del Rio T."/>
            <person name="Dalin E."/>
            <person name="Tice H."/>
            <person name="Bruce D."/>
            <person name="Goodwin L."/>
            <person name="Pitluck S."/>
            <person name="Munk A.C."/>
            <person name="Brettin T."/>
            <person name="Detter J.C."/>
            <person name="Han C."/>
            <person name="Tapia R."/>
            <person name="Schmutz J."/>
            <person name="Larimer F."/>
            <person name="Land M."/>
            <person name="Hauser L."/>
            <person name="Challacombe J.F."/>
            <person name="Green L."/>
            <person name="Lindler L.E."/>
            <person name="Nikolich M.P."/>
            <person name="Richardson P."/>
        </authorList>
    </citation>
    <scope>NUCLEOTIDE SEQUENCE [LARGE SCALE GENOMIC DNA]</scope>
    <source>
        <strain>YPIII</strain>
    </source>
</reference>
<feature type="chain" id="PRO_0000374663" description="tRNA-2-methylthio-N(6)-dimethylallyladenosine synthase">
    <location>
        <begin position="1"/>
        <end position="474"/>
    </location>
</feature>
<feature type="domain" description="MTTase N-terminal" evidence="1">
    <location>
        <begin position="3"/>
        <end position="120"/>
    </location>
</feature>
<feature type="domain" description="Radical SAM core" evidence="2">
    <location>
        <begin position="143"/>
        <end position="375"/>
    </location>
</feature>
<feature type="domain" description="TRAM" evidence="1">
    <location>
        <begin position="378"/>
        <end position="441"/>
    </location>
</feature>
<feature type="binding site" evidence="1">
    <location>
        <position position="12"/>
    </location>
    <ligand>
        <name>[4Fe-4S] cluster</name>
        <dbReference type="ChEBI" id="CHEBI:49883"/>
        <label>1</label>
    </ligand>
</feature>
<feature type="binding site" evidence="1">
    <location>
        <position position="49"/>
    </location>
    <ligand>
        <name>[4Fe-4S] cluster</name>
        <dbReference type="ChEBI" id="CHEBI:49883"/>
        <label>1</label>
    </ligand>
</feature>
<feature type="binding site" evidence="1">
    <location>
        <position position="83"/>
    </location>
    <ligand>
        <name>[4Fe-4S] cluster</name>
        <dbReference type="ChEBI" id="CHEBI:49883"/>
        <label>1</label>
    </ligand>
</feature>
<feature type="binding site" evidence="1">
    <location>
        <position position="157"/>
    </location>
    <ligand>
        <name>[4Fe-4S] cluster</name>
        <dbReference type="ChEBI" id="CHEBI:49883"/>
        <label>2</label>
        <note>4Fe-4S-S-AdoMet</note>
    </ligand>
</feature>
<feature type="binding site" evidence="1">
    <location>
        <position position="161"/>
    </location>
    <ligand>
        <name>[4Fe-4S] cluster</name>
        <dbReference type="ChEBI" id="CHEBI:49883"/>
        <label>2</label>
        <note>4Fe-4S-S-AdoMet</note>
    </ligand>
</feature>
<feature type="binding site" evidence="1">
    <location>
        <position position="164"/>
    </location>
    <ligand>
        <name>[4Fe-4S] cluster</name>
        <dbReference type="ChEBI" id="CHEBI:49883"/>
        <label>2</label>
        <note>4Fe-4S-S-AdoMet</note>
    </ligand>
</feature>
<accession>B1JG95</accession>
<evidence type="ECO:0000255" key="1">
    <source>
        <dbReference type="HAMAP-Rule" id="MF_01864"/>
    </source>
</evidence>
<evidence type="ECO:0000255" key="2">
    <source>
        <dbReference type="PROSITE-ProRule" id="PRU01266"/>
    </source>
</evidence>
<evidence type="ECO:0000305" key="3"/>
<name>MIAB_YERPY</name>
<keyword id="KW-0004">4Fe-4S</keyword>
<keyword id="KW-0963">Cytoplasm</keyword>
<keyword id="KW-0408">Iron</keyword>
<keyword id="KW-0411">Iron-sulfur</keyword>
<keyword id="KW-0479">Metal-binding</keyword>
<keyword id="KW-0949">S-adenosyl-L-methionine</keyword>
<keyword id="KW-0808">Transferase</keyword>
<keyword id="KW-0819">tRNA processing</keyword>
<gene>
    <name evidence="1" type="primary">miaB</name>
    <name type="ordered locus">YPK_3005</name>
</gene>
<sequence>MTKKLHIKTWGCQMNEYDSSKMADLLASTHGYQLTTIPEEADLLLLNTCSIREKAQEKVFSLLGQWKLLKEKNPQLIIGVGGCVASQEGEQLRQRAPCVDVIFGPQTLHRLPEMINHVQETNSPVVDISFPEIEKFDRLPEPRAEGPTAFVSIMEGCNKYCTFCVVPYTRGEEVSRPSDDILFEIAQLAAQGVREVNLLGQNVNAYRGATYDGDICSFAELLRLVAAIDGIDRIRFTTSHPIEFTDDIIDVYRDTPELVSFLHLPVQSGSDRILTMMKRAHTALEYKAIIRKLRQARPDIQISSDFIVGFPGETQQDFEQTMKLVADIHFDTSYSFIYSPRPGTPAADLPDNVSEEEKKQRLHILQQRISQQAMEISRKMVGTVQRVLVEGTSRKNVMELAGRTENNRVVNFEGSPDMIGKFVDVEIVNVYASSLRGILLRTEDQMDLRTHESPQSVIARTRKENEIGVGIYQP</sequence>